<sequence length="100" mass="11050">MSSQFLLAFFLVLLVLGYEVQGAQGLQQDDPGSPALFGKVQESISSYWDTAKAAAQELYQKTYLTSVDEKLRDMYSKSSAAMSTYAGIFTDQLFTLLKGE</sequence>
<protein>
    <recommendedName>
        <fullName>Apolipoprotein C-II</fullName>
        <shortName>Apo-CII</shortName>
        <shortName>ApoC-II</shortName>
    </recommendedName>
    <alternativeName>
        <fullName>Apolipoprotein C2</fullName>
    </alternativeName>
    <component>
        <recommendedName>
            <fullName>Proapolipoprotein C-II</fullName>
            <shortName>ProapoC-II</shortName>
        </recommendedName>
    </component>
</protein>
<dbReference type="EMBL" id="JH000571">
    <property type="protein sequence ID" value="EGW05332.1"/>
    <property type="molecule type" value="Genomic_DNA"/>
</dbReference>
<dbReference type="RefSeq" id="XP_007644140.1">
    <property type="nucleotide sequence ID" value="XM_007645950.1"/>
</dbReference>
<dbReference type="SMR" id="G3HPD1"/>
<dbReference type="FunCoup" id="G3HPD1">
    <property type="interactions" value="8"/>
</dbReference>
<dbReference type="STRING" id="10029.G3HPD1"/>
<dbReference type="PaxDb" id="10029-XP_007607588.1"/>
<dbReference type="Ensembl" id="ENSCGRT00001006813.1">
    <property type="protein sequence ID" value="ENSCGRP00001004537.1"/>
    <property type="gene ID" value="ENSCGRG00001005778.1"/>
</dbReference>
<dbReference type="eggNOG" id="ENOG502SEJB">
    <property type="taxonomic scope" value="Eukaryota"/>
</dbReference>
<dbReference type="GeneTree" id="ENSGT00390000007913"/>
<dbReference type="InParanoid" id="G3HPD1"/>
<dbReference type="OMA" id="GTHEPQE"/>
<dbReference type="Proteomes" id="UP000001075">
    <property type="component" value="Unassembled WGS sequence"/>
</dbReference>
<dbReference type="Proteomes" id="UP000694386">
    <property type="component" value="Unplaced"/>
</dbReference>
<dbReference type="Proteomes" id="UP001108280">
    <property type="component" value="Unplaced"/>
</dbReference>
<dbReference type="GO" id="GO:0042627">
    <property type="term" value="C:chylomicron"/>
    <property type="evidence" value="ECO:0007669"/>
    <property type="project" value="UniProtKB-KW"/>
</dbReference>
<dbReference type="GO" id="GO:0034363">
    <property type="term" value="C:intermediate-density lipoprotein particle"/>
    <property type="evidence" value="ECO:0007669"/>
    <property type="project" value="Ensembl"/>
</dbReference>
<dbReference type="GO" id="GO:0034362">
    <property type="term" value="C:low-density lipoprotein particle"/>
    <property type="evidence" value="ECO:0007669"/>
    <property type="project" value="UniProtKB-KW"/>
</dbReference>
<dbReference type="GO" id="GO:0034366">
    <property type="term" value="C:spherical high-density lipoprotein particle"/>
    <property type="evidence" value="ECO:0007669"/>
    <property type="project" value="Ensembl"/>
</dbReference>
<dbReference type="GO" id="GO:0034361">
    <property type="term" value="C:very-low-density lipoprotein particle"/>
    <property type="evidence" value="ECO:0007669"/>
    <property type="project" value="UniProtKB-KW"/>
</dbReference>
<dbReference type="GO" id="GO:0055102">
    <property type="term" value="F:lipase inhibitor activity"/>
    <property type="evidence" value="ECO:0007669"/>
    <property type="project" value="Ensembl"/>
</dbReference>
<dbReference type="GO" id="GO:0008289">
    <property type="term" value="F:lipid binding"/>
    <property type="evidence" value="ECO:0007669"/>
    <property type="project" value="Ensembl"/>
</dbReference>
<dbReference type="GO" id="GO:0060230">
    <property type="term" value="F:lipoprotein lipase activator activity"/>
    <property type="evidence" value="ECO:0007669"/>
    <property type="project" value="Ensembl"/>
</dbReference>
<dbReference type="GO" id="GO:0016004">
    <property type="term" value="F:phospholipase activator activity"/>
    <property type="evidence" value="ECO:0007669"/>
    <property type="project" value="Ensembl"/>
</dbReference>
<dbReference type="GO" id="GO:0043274">
    <property type="term" value="F:phospholipase binding"/>
    <property type="evidence" value="ECO:0007669"/>
    <property type="project" value="Ensembl"/>
</dbReference>
<dbReference type="GO" id="GO:0033344">
    <property type="term" value="P:cholesterol efflux"/>
    <property type="evidence" value="ECO:0007669"/>
    <property type="project" value="Ensembl"/>
</dbReference>
<dbReference type="GO" id="GO:0034382">
    <property type="term" value="P:chylomicron remnant clearance"/>
    <property type="evidence" value="ECO:0007669"/>
    <property type="project" value="Ensembl"/>
</dbReference>
<dbReference type="GO" id="GO:0034371">
    <property type="term" value="P:chylomicron remodeling"/>
    <property type="evidence" value="ECO:0007669"/>
    <property type="project" value="Ensembl"/>
</dbReference>
<dbReference type="GO" id="GO:0034384">
    <property type="term" value="P:high-density lipoprotein particle clearance"/>
    <property type="evidence" value="ECO:0007669"/>
    <property type="project" value="Ensembl"/>
</dbReference>
<dbReference type="GO" id="GO:0016042">
    <property type="term" value="P:lipid catabolic process"/>
    <property type="evidence" value="ECO:0007669"/>
    <property type="project" value="UniProtKB-KW"/>
</dbReference>
<dbReference type="GO" id="GO:0032375">
    <property type="term" value="P:negative regulation of cholesterol transport"/>
    <property type="evidence" value="ECO:0007669"/>
    <property type="project" value="Ensembl"/>
</dbReference>
<dbReference type="GO" id="GO:0045833">
    <property type="term" value="P:negative regulation of lipid metabolic process"/>
    <property type="evidence" value="ECO:0007669"/>
    <property type="project" value="Ensembl"/>
</dbReference>
<dbReference type="GO" id="GO:0048261">
    <property type="term" value="P:negative regulation of receptor-mediated endocytosis"/>
    <property type="evidence" value="ECO:0007669"/>
    <property type="project" value="Ensembl"/>
</dbReference>
<dbReference type="GO" id="GO:0010916">
    <property type="term" value="P:negative regulation of very-low-density lipoprotein particle clearance"/>
    <property type="evidence" value="ECO:0007669"/>
    <property type="project" value="Ensembl"/>
</dbReference>
<dbReference type="GO" id="GO:0033700">
    <property type="term" value="P:phospholipid efflux"/>
    <property type="evidence" value="ECO:0007669"/>
    <property type="project" value="Ensembl"/>
</dbReference>
<dbReference type="GO" id="GO:0045723">
    <property type="term" value="P:positive regulation of fatty acid biosynthetic process"/>
    <property type="evidence" value="ECO:0007669"/>
    <property type="project" value="Ensembl"/>
</dbReference>
<dbReference type="GO" id="GO:0060697">
    <property type="term" value="P:positive regulation of phospholipid catabolic process"/>
    <property type="evidence" value="ECO:0007669"/>
    <property type="project" value="Ensembl"/>
</dbReference>
<dbReference type="GO" id="GO:0010898">
    <property type="term" value="P:positive regulation of triglyceride catabolic process"/>
    <property type="evidence" value="ECO:0007669"/>
    <property type="project" value="Ensembl"/>
</dbReference>
<dbReference type="GO" id="GO:0010902">
    <property type="term" value="P:positive regulation of very-low-density lipoprotein particle remodeling"/>
    <property type="evidence" value="ECO:0007669"/>
    <property type="project" value="Ensembl"/>
</dbReference>
<dbReference type="GO" id="GO:0070328">
    <property type="term" value="P:triglyceride homeostasis"/>
    <property type="evidence" value="ECO:0007669"/>
    <property type="project" value="Ensembl"/>
</dbReference>
<dbReference type="FunFam" id="1.10.1440.10:FF:000001">
    <property type="entry name" value="Apolipoprotein C-II"/>
    <property type="match status" value="1"/>
</dbReference>
<dbReference type="Gene3D" id="1.10.1440.10">
    <property type="entry name" value="Apolipoprotein C-II"/>
    <property type="match status" value="1"/>
</dbReference>
<dbReference type="InterPro" id="IPR008019">
    <property type="entry name" value="Apo-CII"/>
</dbReference>
<dbReference type="InterPro" id="IPR023121">
    <property type="entry name" value="ApoC-II_dom_sf"/>
</dbReference>
<dbReference type="PANTHER" id="PTHR16566">
    <property type="entry name" value="APOLIPOPROTEIN C-II"/>
    <property type="match status" value="1"/>
</dbReference>
<dbReference type="PANTHER" id="PTHR16566:SF0">
    <property type="entry name" value="APOLIPOPROTEIN C-II"/>
    <property type="match status" value="1"/>
</dbReference>
<dbReference type="Pfam" id="PF05355">
    <property type="entry name" value="Apo-CII"/>
    <property type="match status" value="1"/>
</dbReference>
<accession>G3HPD1</accession>
<proteinExistence type="inferred from homology"/>
<name>APOC2_CRIGR</name>
<evidence type="ECO:0000250" key="1">
    <source>
        <dbReference type="UniProtKB" id="P02655"/>
    </source>
</evidence>
<evidence type="ECO:0000305" key="2"/>
<organism>
    <name type="scientific">Cricetulus griseus</name>
    <name type="common">Chinese hamster</name>
    <name type="synonym">Cricetulus barabensis griseus</name>
    <dbReference type="NCBI Taxonomy" id="10029"/>
    <lineage>
        <taxon>Eukaryota</taxon>
        <taxon>Metazoa</taxon>
        <taxon>Chordata</taxon>
        <taxon>Craniata</taxon>
        <taxon>Vertebrata</taxon>
        <taxon>Euteleostomi</taxon>
        <taxon>Mammalia</taxon>
        <taxon>Eutheria</taxon>
        <taxon>Euarchontoglires</taxon>
        <taxon>Glires</taxon>
        <taxon>Rodentia</taxon>
        <taxon>Myomorpha</taxon>
        <taxon>Muroidea</taxon>
        <taxon>Cricetidae</taxon>
        <taxon>Cricetinae</taxon>
        <taxon>Cricetulus</taxon>
    </lineage>
</organism>
<feature type="signal peptide" evidence="1">
    <location>
        <begin position="1"/>
        <end position="22"/>
    </location>
</feature>
<feature type="chain" id="PRO_0000453991" description="Proapolipoprotein C-II">
    <location>
        <begin position="23"/>
        <end position="100"/>
    </location>
</feature>
<feature type="chain" id="PRO_5003444500" description="Apolipoprotein C-II" evidence="1">
    <location>
        <begin position="29"/>
        <end position="100"/>
    </location>
</feature>
<feature type="region of interest" description="Lipid binding" evidence="1">
    <location>
        <begin position="66"/>
        <end position="74"/>
    </location>
</feature>
<feature type="region of interest" description="Lipoprotein lipase cofactor" evidence="1">
    <location>
        <begin position="78"/>
        <end position="100"/>
    </location>
</feature>
<comment type="function">
    <text evidence="1">Component of chylomicrons, very low-density lipoproteins (VLDL), low-density lipoproteins (LDL), and high-density lipoproteins (HDL) in plasma. Plays an important role in lipoprotein metabolism as an activator of lipoprotein lipase.</text>
</comment>
<comment type="subcellular location">
    <subcellularLocation>
        <location evidence="1">Secreted</location>
    </subcellularLocation>
</comment>
<comment type="PTM">
    <text evidence="1">Proapolipoprotein C-II is synthesized as a sialic acid containing glycoprotein which is subsequently desialylated prior to its proteolytic processing.</text>
</comment>
<comment type="PTM">
    <text evidence="1">Proapolipoprotein C-II, the major form found in plasma undergoes proteolytic cleavage of its N-terminal hexapeptide to generate the mature form apolipoprotein C-II, which occurs as the minor form in plasma.</text>
</comment>
<comment type="similarity">
    <text evidence="2">Belongs to the apolipoprotein C2 family.</text>
</comment>
<gene>
    <name type="primary">APOC2</name>
</gene>
<reference key="1">
    <citation type="journal article" date="2011" name="Nat. Biotechnol.">
        <title>The genomic sequence of the Chinese hamster ovary (CHO)-K1 cell line.</title>
        <authorList>
            <person name="Xu X."/>
            <person name="Nagarajan H."/>
            <person name="Lewis N.E."/>
            <person name="Pan S."/>
            <person name="Cai Z."/>
            <person name="Liu X."/>
            <person name="Chen W."/>
            <person name="Xie M."/>
            <person name="Wang W."/>
            <person name="Hammond S."/>
            <person name="Andersen M.R."/>
            <person name="Neff N."/>
            <person name="Passarelli B."/>
            <person name="Koh W."/>
            <person name="Fan H.C."/>
            <person name="Wang J."/>
            <person name="Gui Y."/>
            <person name="Lee K.H."/>
            <person name="Betenbaugh M.J."/>
            <person name="Quake S.R."/>
            <person name="Famili I."/>
            <person name="Palsson B.O."/>
            <person name="Wang J."/>
        </authorList>
    </citation>
    <scope>NUCLEOTIDE SEQUENCE [LARGE SCALE GENOMIC DNA]</scope>
</reference>
<keyword id="KW-0162">Chylomicron</keyword>
<keyword id="KW-0345">HDL</keyword>
<keyword id="KW-0427">LDL</keyword>
<keyword id="KW-0442">Lipid degradation</keyword>
<keyword id="KW-0443">Lipid metabolism</keyword>
<keyword id="KW-0445">Lipid transport</keyword>
<keyword id="KW-1185">Reference proteome</keyword>
<keyword id="KW-0964">Secreted</keyword>
<keyword id="KW-0732">Signal</keyword>
<keyword id="KW-0813">Transport</keyword>
<keyword id="KW-0850">VLDL</keyword>